<dbReference type="PIR" id="S77993">
    <property type="entry name" value="S77993"/>
</dbReference>
<dbReference type="UniPathway" id="UPA00705"/>
<dbReference type="GO" id="GO:0005743">
    <property type="term" value="C:mitochondrial inner membrane"/>
    <property type="evidence" value="ECO:0007669"/>
    <property type="project" value="UniProtKB-SubCell"/>
</dbReference>
<dbReference type="GO" id="GO:0006119">
    <property type="term" value="P:oxidative phosphorylation"/>
    <property type="evidence" value="ECO:0007669"/>
    <property type="project" value="UniProtKB-UniPathway"/>
</dbReference>
<proteinExistence type="evidence at protein level"/>
<name>COX8A_THUOB</name>
<keyword id="KW-0903">Direct protein sequencing</keyword>
<keyword id="KW-0472">Membrane</keyword>
<keyword id="KW-0496">Mitochondrion</keyword>
<keyword id="KW-0999">Mitochondrion inner membrane</keyword>
<evidence type="ECO:0000250" key="1">
    <source>
        <dbReference type="UniProtKB" id="P10175"/>
    </source>
</evidence>
<evidence type="ECO:0000250" key="2">
    <source>
        <dbReference type="UniProtKB" id="P10176"/>
    </source>
</evidence>
<evidence type="ECO:0000305" key="3"/>
<organism>
    <name type="scientific">Thunnus obesus</name>
    <name type="common">Bigeye tuna</name>
    <dbReference type="NCBI Taxonomy" id="8241"/>
    <lineage>
        <taxon>Eukaryota</taxon>
        <taxon>Metazoa</taxon>
        <taxon>Chordata</taxon>
        <taxon>Craniata</taxon>
        <taxon>Vertebrata</taxon>
        <taxon>Euteleostomi</taxon>
        <taxon>Actinopterygii</taxon>
        <taxon>Neopterygii</taxon>
        <taxon>Teleostei</taxon>
        <taxon>Neoteleostei</taxon>
        <taxon>Acanthomorphata</taxon>
        <taxon>Pelagiaria</taxon>
        <taxon>Scombriformes</taxon>
        <taxon>Scombridae</taxon>
        <taxon>Thunnus</taxon>
    </lineage>
</organism>
<feature type="chain" id="PRO_0000150127" description="Cytochrome c oxidase subunit 8A, mitochondrial">
    <location>
        <begin position="1"/>
        <end position="19" status="greater than"/>
    </location>
</feature>
<feature type="non-terminal residue">
    <location>
        <position position="19"/>
    </location>
</feature>
<comment type="function">
    <text evidence="1">Component of the cytochrome c oxidase, the last enzyme in the mitochondrial electron transport chain which drives oxidative phosphorylation. The respiratory chain contains 3 multisubunit complexes succinate dehydrogenase (complex II, CII), ubiquinol-cytochrome c oxidoreductase (cytochrome b-c1 complex, complex III, CIII) and cytochrome c oxidase (complex IV, CIV), that cooperate to transfer electrons derived from NADH and succinate to molecular oxygen, creating an electrochemical gradient over the inner membrane that drives transmembrane transport and the ATP synthase. Cytochrome c oxidase is the component of the respiratory chain that catalyzes the reduction of oxygen to water. Electrons originating from reduced cytochrome c in the intermembrane space (IMS) are transferred via the dinuclear copper A center (CU(A)) of subunit 2 and heme A of subunit 1 to the active site in subunit 1, a binuclear center (BNC) formed by heme A3 and copper B (CU(B)). The BNC reduces molecular oxygen to 2 water molecules using 4 electrons from cytochrome c in the IMS and 4 protons from the mitochondrial matrix.</text>
</comment>
<comment type="pathway">
    <text evidence="1">Energy metabolism; oxidative phosphorylation.</text>
</comment>
<comment type="subunit">
    <text evidence="2">Component of the cytochrome c oxidase (complex IV, CIV), a multisubunit enzyme composed of 14 subunits. The complex is composed of a catalytic core of 3 subunits MT-CO1, MT-CO2 and MT-CO3, encoded in the mitochondrial DNA, and 11 supernumerary subunits COX4I, COX5A, COX5B, COX6A, COX6B, COX6C, COX7A, COX7B, COX7C, COX8 and NDUFA4, which are encoded in the nuclear genome. The complex exists as a monomer or a dimer and forms supercomplexes (SCs) in the inner mitochondrial membrane with NADH-ubiquinone oxidoreductase (complex I, CI) and ubiquinol-cytochrome c oxidoreductase (cytochrome b-c1 complex, complex III, CIII), resulting in different assemblies (supercomplex SCI(1)III(2)IV(1) and megacomplex MCI(2)III(2)IV(2)).</text>
</comment>
<comment type="subcellular location">
    <subcellularLocation>
        <location evidence="2">Mitochondrion inner membrane</location>
        <topology evidence="2">Single-pass membrane protein</topology>
    </subcellularLocation>
</comment>
<comment type="similarity">
    <text evidence="3">Belongs to the cytochrome c oxidase VIII family.</text>
</comment>
<accession>P80984</accession>
<reference key="1">
    <citation type="journal article" date="1997" name="Eur. J. Biochem.">
        <title>The subunit structure of cytochrome-c oxidase from tuna heart and liver.</title>
        <authorList>
            <person name="Arnold S."/>
            <person name="Lee I."/>
            <person name="Kim M."/>
            <person name="Song E."/>
            <person name="Linder D."/>
            <person name="Lottspeich F."/>
            <person name="Kadenbach B."/>
        </authorList>
    </citation>
    <scope>PROTEIN SEQUENCE</scope>
    <source>
        <tissue>Liver</tissue>
    </source>
</reference>
<protein>
    <recommendedName>
        <fullName>Cytochrome c oxidase subunit 8A, mitochondrial</fullName>
    </recommendedName>
    <alternativeName>
        <fullName>Cytochrome c oxidase polypeptide VIII-2</fullName>
    </alternativeName>
</protein>
<sequence length="19" mass="2127">VHGKPATIDHFALIXVSYF</sequence>